<evidence type="ECO:0000255" key="1">
    <source>
        <dbReference type="HAMAP-Rule" id="MF_00591"/>
    </source>
</evidence>
<comment type="function">
    <text evidence="1">Catalytic component of the exosome, which is a complex involved in RNA degradation. Has 3'-&gt;5' exoribonuclease activity. Can also synthesize heteromeric RNA-tails.</text>
</comment>
<comment type="subunit">
    <text evidence="1">Component of the archaeal exosome complex. Forms a hexameric ring-like arrangement composed of 3 Rrp41-Rrp42 heterodimers. The hexameric ring associates with a trimer of Rrp4 and/or Csl4 subunits.</text>
</comment>
<comment type="subcellular location">
    <subcellularLocation>
        <location evidence="1">Cytoplasm</location>
    </subcellularLocation>
</comment>
<comment type="similarity">
    <text evidence="1">Belongs to the RNase PH family. Rrp41 subfamily.</text>
</comment>
<proteinExistence type="inferred from homology"/>
<gene>
    <name evidence="1" type="primary">rrp41</name>
    <name type="ordered locus">Pars_1937</name>
</gene>
<organism>
    <name type="scientific">Pyrobaculum arsenaticum (strain DSM 13514 / JCM 11321 / PZ6)</name>
    <dbReference type="NCBI Taxonomy" id="340102"/>
    <lineage>
        <taxon>Archaea</taxon>
        <taxon>Thermoproteota</taxon>
        <taxon>Thermoprotei</taxon>
        <taxon>Thermoproteales</taxon>
        <taxon>Thermoproteaceae</taxon>
        <taxon>Pyrobaculum</taxon>
    </lineage>
</organism>
<protein>
    <recommendedName>
        <fullName evidence="1">Exosome complex component Rrp41</fullName>
        <ecNumber evidence="1">3.1.13.-</ecNumber>
    </recommendedName>
</protein>
<reference key="1">
    <citation type="submission" date="2007-04" db="EMBL/GenBank/DDBJ databases">
        <title>Complete sequence of Pyrobaculum arsenaticum DSM 13514.</title>
        <authorList>
            <consortium name="US DOE Joint Genome Institute"/>
            <person name="Copeland A."/>
            <person name="Lucas S."/>
            <person name="Lapidus A."/>
            <person name="Barry K."/>
            <person name="Glavina del Rio T."/>
            <person name="Dalin E."/>
            <person name="Tice H."/>
            <person name="Pitluck S."/>
            <person name="Chain P."/>
            <person name="Malfatti S."/>
            <person name="Shin M."/>
            <person name="Vergez L."/>
            <person name="Schmutz J."/>
            <person name="Larimer F."/>
            <person name="Land M."/>
            <person name="Hauser L."/>
            <person name="Kyrpides N."/>
            <person name="Mikhailova N."/>
            <person name="Cozen A.E."/>
            <person name="Fitz-Gibbon S.T."/>
            <person name="House C.H."/>
            <person name="Saltikov C."/>
            <person name="Lowe T.M."/>
            <person name="Richardson P."/>
        </authorList>
    </citation>
    <scope>NUCLEOTIDE SEQUENCE [LARGE SCALE GENOMIC DNA]</scope>
    <source>
        <strain>ATCC 700994 / DSM 13514 / JCM 11321 / PZ6</strain>
    </source>
</reference>
<name>RRP41_PYRAR</name>
<sequence>MKKPPVPLLQNGVRADGRLPDQMREVKISVGVVSNADGSAMVSYGATTAVAAVYGPREMHPRHLSLPDRGVMRVRYHMAPFSTKDERKSPTPSRREIEISKVLREALEPAVLLEQYPRSRIDVFIEIIQADGSTRVASLTAASLALADAGIYMRDLVVGVSVGLVDGVVVLDLNGLEDNYGEGDLPVGYMPNLKRFVLLQLDGAWKREVFLQALNLAVKGAEYVYQIARDALKNKYMSIAEEIYGR</sequence>
<dbReference type="EC" id="3.1.13.-" evidence="1"/>
<dbReference type="EMBL" id="CP000660">
    <property type="protein sequence ID" value="ABP51484.1"/>
    <property type="molecule type" value="Genomic_DNA"/>
</dbReference>
<dbReference type="SMR" id="A4WM67"/>
<dbReference type="STRING" id="340102.Pars_1937"/>
<dbReference type="KEGG" id="pas:Pars_1937"/>
<dbReference type="HOGENOM" id="CLU_063514_0_0_2"/>
<dbReference type="OrthoDB" id="24266at2157"/>
<dbReference type="PhylomeDB" id="A4WM67"/>
<dbReference type="Proteomes" id="UP000001567">
    <property type="component" value="Chromosome"/>
</dbReference>
<dbReference type="GO" id="GO:0000177">
    <property type="term" value="C:cytoplasmic exosome (RNase complex)"/>
    <property type="evidence" value="ECO:0007669"/>
    <property type="project" value="TreeGrafter"/>
</dbReference>
<dbReference type="GO" id="GO:0000175">
    <property type="term" value="F:3'-5'-RNA exonuclease activity"/>
    <property type="evidence" value="ECO:0007669"/>
    <property type="project" value="UniProtKB-UniRule"/>
</dbReference>
<dbReference type="GO" id="GO:0003723">
    <property type="term" value="F:RNA binding"/>
    <property type="evidence" value="ECO:0007669"/>
    <property type="project" value="TreeGrafter"/>
</dbReference>
<dbReference type="GO" id="GO:0010467">
    <property type="term" value="P:gene expression"/>
    <property type="evidence" value="ECO:0007669"/>
    <property type="project" value="UniProtKB-ARBA"/>
</dbReference>
<dbReference type="GO" id="GO:0016075">
    <property type="term" value="P:rRNA catabolic process"/>
    <property type="evidence" value="ECO:0007669"/>
    <property type="project" value="TreeGrafter"/>
</dbReference>
<dbReference type="CDD" id="cd11366">
    <property type="entry name" value="RNase_PH_archRRP41"/>
    <property type="match status" value="1"/>
</dbReference>
<dbReference type="FunFam" id="3.30.230.70:FF:000004">
    <property type="entry name" value="Exosome complex component Rrp41"/>
    <property type="match status" value="1"/>
</dbReference>
<dbReference type="Gene3D" id="3.30.230.70">
    <property type="entry name" value="GHMP Kinase, N-terminal domain"/>
    <property type="match status" value="1"/>
</dbReference>
<dbReference type="HAMAP" id="MF_00591">
    <property type="entry name" value="Exosome_Rrp41"/>
    <property type="match status" value="1"/>
</dbReference>
<dbReference type="InterPro" id="IPR001247">
    <property type="entry name" value="ExoRNase_PH_dom1"/>
</dbReference>
<dbReference type="InterPro" id="IPR015847">
    <property type="entry name" value="ExoRNase_PH_dom2"/>
</dbReference>
<dbReference type="InterPro" id="IPR036345">
    <property type="entry name" value="ExoRNase_PH_dom2_sf"/>
</dbReference>
<dbReference type="InterPro" id="IPR027408">
    <property type="entry name" value="PNPase/RNase_PH_dom_sf"/>
</dbReference>
<dbReference type="InterPro" id="IPR020568">
    <property type="entry name" value="Ribosomal_Su5_D2-typ_SF"/>
</dbReference>
<dbReference type="InterPro" id="IPR050080">
    <property type="entry name" value="RNase_PH"/>
</dbReference>
<dbReference type="InterPro" id="IPR011807">
    <property type="entry name" value="Rrp41"/>
</dbReference>
<dbReference type="NCBIfam" id="TIGR02065">
    <property type="entry name" value="ECX1"/>
    <property type="match status" value="1"/>
</dbReference>
<dbReference type="PANTHER" id="PTHR11953">
    <property type="entry name" value="EXOSOME COMPLEX COMPONENT"/>
    <property type="match status" value="1"/>
</dbReference>
<dbReference type="PANTHER" id="PTHR11953:SF0">
    <property type="entry name" value="EXOSOME COMPLEX COMPONENT RRP41"/>
    <property type="match status" value="1"/>
</dbReference>
<dbReference type="Pfam" id="PF01138">
    <property type="entry name" value="RNase_PH"/>
    <property type="match status" value="1"/>
</dbReference>
<dbReference type="Pfam" id="PF03725">
    <property type="entry name" value="RNase_PH_C"/>
    <property type="match status" value="1"/>
</dbReference>
<dbReference type="SUPFAM" id="SSF55666">
    <property type="entry name" value="Ribonuclease PH domain 2-like"/>
    <property type="match status" value="1"/>
</dbReference>
<dbReference type="SUPFAM" id="SSF54211">
    <property type="entry name" value="Ribosomal protein S5 domain 2-like"/>
    <property type="match status" value="1"/>
</dbReference>
<feature type="chain" id="PRO_1000146957" description="Exosome complex component Rrp41">
    <location>
        <begin position="1"/>
        <end position="246"/>
    </location>
</feature>
<keyword id="KW-0963">Cytoplasm</keyword>
<keyword id="KW-0269">Exonuclease</keyword>
<keyword id="KW-0271">Exosome</keyword>
<keyword id="KW-0378">Hydrolase</keyword>
<keyword id="KW-0540">Nuclease</keyword>
<accession>A4WM67</accession>